<gene>
    <name type="primary">GFI1B</name>
    <name type="synonym">GFI</name>
</gene>
<evidence type="ECO:0000250" key="1"/>
<evidence type="ECO:0000255" key="2">
    <source>
        <dbReference type="PROSITE-ProRule" id="PRU00042"/>
    </source>
</evidence>
<evidence type="ECO:0000269" key="3">
    <source>
    </source>
</evidence>
<organism>
    <name type="scientific">Gallus gallus</name>
    <name type="common">Chicken</name>
    <dbReference type="NCBI Taxonomy" id="9031"/>
    <lineage>
        <taxon>Eukaryota</taxon>
        <taxon>Metazoa</taxon>
        <taxon>Chordata</taxon>
        <taxon>Craniata</taxon>
        <taxon>Vertebrata</taxon>
        <taxon>Euteleostomi</taxon>
        <taxon>Archelosauria</taxon>
        <taxon>Archosauria</taxon>
        <taxon>Dinosauria</taxon>
        <taxon>Saurischia</taxon>
        <taxon>Theropoda</taxon>
        <taxon>Coelurosauria</taxon>
        <taxon>Aves</taxon>
        <taxon>Neognathae</taxon>
        <taxon>Galloanserae</taxon>
        <taxon>Galliformes</taxon>
        <taxon>Phasianidae</taxon>
        <taxon>Phasianinae</taxon>
        <taxon>Gallus</taxon>
    </lineage>
</organism>
<feature type="chain" id="PRO_0000306329" description="Zinc finger protein Gfi-1b">
    <location>
        <begin position="1"/>
        <end position="337"/>
    </location>
</feature>
<feature type="zinc finger region" description="C2H2-type 1" evidence="2">
    <location>
        <begin position="170"/>
        <end position="193"/>
    </location>
</feature>
<feature type="zinc finger region" description="C2H2-type 2" evidence="2">
    <location>
        <begin position="199"/>
        <end position="221"/>
    </location>
</feature>
<feature type="zinc finger region" description="C2H2-type 3" evidence="2">
    <location>
        <begin position="227"/>
        <end position="249"/>
    </location>
</feature>
<feature type="zinc finger region" description="C2H2-type 4" evidence="2">
    <location>
        <begin position="255"/>
        <end position="277"/>
    </location>
</feature>
<feature type="zinc finger region" description="C2H2-type 5" evidence="2">
    <location>
        <begin position="283"/>
        <end position="305"/>
    </location>
</feature>
<feature type="zinc finger region" description="C2H2-type 6" evidence="2">
    <location>
        <begin position="311"/>
        <end position="334"/>
    </location>
</feature>
<feature type="region of interest" description="Mediates repression of transcription" evidence="1">
    <location>
        <begin position="1"/>
        <end position="20"/>
    </location>
</feature>
<feature type="region of interest" description="SNAG domain" evidence="1">
    <location>
        <begin position="1"/>
        <end position="20"/>
    </location>
</feature>
<keyword id="KW-0156">Chromatin regulator</keyword>
<keyword id="KW-0217">Developmental protein</keyword>
<keyword id="KW-0238">DNA-binding</keyword>
<keyword id="KW-0479">Metal-binding</keyword>
<keyword id="KW-0539">Nucleus</keyword>
<keyword id="KW-1185">Reference proteome</keyword>
<keyword id="KW-0677">Repeat</keyword>
<keyword id="KW-0804">Transcription</keyword>
<keyword id="KW-0805">Transcription regulation</keyword>
<keyword id="KW-0862">Zinc</keyword>
<keyword id="KW-0863">Zinc-finger</keyword>
<accession>O42409</accession>
<protein>
    <recommendedName>
        <fullName>Zinc finger protein Gfi-1b</fullName>
    </recommendedName>
    <alternativeName>
        <fullName>Growth factor-independent protein 1B</fullName>
    </alternativeName>
</protein>
<reference key="1">
    <citation type="journal article" date="1997" name="Gene">
        <title>Structure and erythroid cell-restricted expression of a chicken cDNA encoding a novel zinc finger protein of the Cys + His class.</title>
        <authorList>
            <person name="Fuchs B."/>
            <person name="Wagner T."/>
            <person name="Roessel N."/>
            <person name="Antoine M."/>
            <person name="Beug H."/>
            <person name="Niessing J."/>
        </authorList>
    </citation>
    <scope>NUCLEOTIDE SEQUENCE [MRNA]</scope>
    <scope>FUNCTION</scope>
    <scope>TISSUE SPECIFICITY</scope>
</reference>
<name>GFI1B_CHICK</name>
<comment type="function">
    <text evidence="3">Essential transcriptional regulator necessary for development and differentiation of erythroid and megakaryocytic lineages. Alters histone methylation by recruiting histone methyltransferase to target genes promoters. Plays a role in heterochromatin formation.</text>
</comment>
<comment type="subcellular location">
    <subcellularLocation>
        <location evidence="1">Nucleus</location>
    </subcellularLocation>
</comment>
<comment type="tissue specificity">
    <text evidence="3">Expressed in erythroid cells of primitive and definitive lineage and bone marrow cells.</text>
</comment>
<comment type="domain">
    <text evidence="1">The zinc finger domain is essential for erythroid expansion and acts as an activation domain whereas non finger domain serves as repression domain.</text>
</comment>
<dbReference type="EMBL" id="Y10898">
    <property type="protein sequence ID" value="CAA71836.1"/>
    <property type="molecule type" value="mRNA"/>
</dbReference>
<dbReference type="RefSeq" id="NP_990422.1">
    <property type="nucleotide sequence ID" value="NM_205091.1"/>
</dbReference>
<dbReference type="RefSeq" id="XP_015134821.1">
    <property type="nucleotide sequence ID" value="XM_015279335.1"/>
</dbReference>
<dbReference type="RefSeq" id="XP_046784712.1">
    <property type="nucleotide sequence ID" value="XM_046928756.1"/>
</dbReference>
<dbReference type="SMR" id="O42409"/>
<dbReference type="FunCoup" id="O42409">
    <property type="interactions" value="152"/>
</dbReference>
<dbReference type="STRING" id="9031.ENSGALP00000005496"/>
<dbReference type="PaxDb" id="9031-ENSGALP00000005496"/>
<dbReference type="GeneID" id="395977"/>
<dbReference type="KEGG" id="gga:395977"/>
<dbReference type="CTD" id="8328"/>
<dbReference type="VEuPathDB" id="HostDB:geneid_395977"/>
<dbReference type="eggNOG" id="KOG1721">
    <property type="taxonomic scope" value="Eukaryota"/>
</dbReference>
<dbReference type="HOGENOM" id="CLU_002678_94_9_1"/>
<dbReference type="InParanoid" id="O42409"/>
<dbReference type="OrthoDB" id="6155966at2759"/>
<dbReference type="PhylomeDB" id="O42409"/>
<dbReference type="TreeFam" id="TF350784"/>
<dbReference type="PRO" id="PR:O42409"/>
<dbReference type="Proteomes" id="UP000000539">
    <property type="component" value="Chromosome 17"/>
</dbReference>
<dbReference type="Bgee" id="ENSGALG00000003478">
    <property type="expression patterns" value="Expressed in lung and 9 other cell types or tissues"/>
</dbReference>
<dbReference type="GO" id="GO:0005654">
    <property type="term" value="C:nucleoplasm"/>
    <property type="evidence" value="ECO:0000318"/>
    <property type="project" value="GO_Central"/>
</dbReference>
<dbReference type="GO" id="GO:0001227">
    <property type="term" value="F:DNA-binding transcription repressor activity, RNA polymerase II-specific"/>
    <property type="evidence" value="ECO:0000318"/>
    <property type="project" value="GO_Central"/>
</dbReference>
<dbReference type="GO" id="GO:0000978">
    <property type="term" value="F:RNA polymerase II cis-regulatory region sequence-specific DNA binding"/>
    <property type="evidence" value="ECO:0000318"/>
    <property type="project" value="GO_Central"/>
</dbReference>
<dbReference type="GO" id="GO:0008270">
    <property type="term" value="F:zinc ion binding"/>
    <property type="evidence" value="ECO:0007669"/>
    <property type="project" value="UniProtKB-KW"/>
</dbReference>
<dbReference type="GO" id="GO:0006325">
    <property type="term" value="P:chromatin organization"/>
    <property type="evidence" value="ECO:0007669"/>
    <property type="project" value="UniProtKB-KW"/>
</dbReference>
<dbReference type="GO" id="GO:0006357">
    <property type="term" value="P:regulation of transcription by RNA polymerase II"/>
    <property type="evidence" value="ECO:0000318"/>
    <property type="project" value="GO_Central"/>
</dbReference>
<dbReference type="FunFam" id="3.30.160.60:FF:000489">
    <property type="entry name" value="Zinc finger protein Gfi-1"/>
    <property type="match status" value="1"/>
</dbReference>
<dbReference type="FunFam" id="3.30.160.60:FF:000827">
    <property type="entry name" value="Zinc finger protein Gfi-1"/>
    <property type="match status" value="1"/>
</dbReference>
<dbReference type="FunFam" id="3.30.160.60:FF:000148">
    <property type="entry name" value="zinc finger protein Gfi-1"/>
    <property type="match status" value="1"/>
</dbReference>
<dbReference type="FunFam" id="3.30.160.60:FF:000245">
    <property type="entry name" value="zinc finger protein Gfi-1"/>
    <property type="match status" value="1"/>
</dbReference>
<dbReference type="FunFam" id="3.30.160.60:FF:000208">
    <property type="entry name" value="zinc finger protein Gfi-1b"/>
    <property type="match status" value="1"/>
</dbReference>
<dbReference type="FunFam" id="3.30.160.60:FF:000432">
    <property type="entry name" value="zinc finger protein Gfi-1b isoform X1"/>
    <property type="match status" value="1"/>
</dbReference>
<dbReference type="Gene3D" id="3.30.160.60">
    <property type="entry name" value="Classic Zinc Finger"/>
    <property type="match status" value="6"/>
</dbReference>
<dbReference type="InterPro" id="IPR036236">
    <property type="entry name" value="Znf_C2H2_sf"/>
</dbReference>
<dbReference type="InterPro" id="IPR013087">
    <property type="entry name" value="Znf_C2H2_type"/>
</dbReference>
<dbReference type="PANTHER" id="PTHR24394">
    <property type="entry name" value="ZINC FINGER PROTEIN"/>
    <property type="match status" value="1"/>
</dbReference>
<dbReference type="PANTHER" id="PTHR24394:SF44">
    <property type="entry name" value="ZINC FINGER PROTEIN 271-LIKE"/>
    <property type="match status" value="1"/>
</dbReference>
<dbReference type="Pfam" id="PF00096">
    <property type="entry name" value="zf-C2H2"/>
    <property type="match status" value="6"/>
</dbReference>
<dbReference type="SMART" id="SM00355">
    <property type="entry name" value="ZnF_C2H2"/>
    <property type="match status" value="6"/>
</dbReference>
<dbReference type="SUPFAM" id="SSF57667">
    <property type="entry name" value="beta-beta-alpha zinc fingers"/>
    <property type="match status" value="3"/>
</dbReference>
<dbReference type="PROSITE" id="PS00028">
    <property type="entry name" value="ZINC_FINGER_C2H2_1"/>
    <property type="match status" value="6"/>
</dbReference>
<dbReference type="PROSITE" id="PS50157">
    <property type="entry name" value="ZINC_FINGER_C2H2_2"/>
    <property type="match status" value="6"/>
</dbReference>
<sequence length="337" mass="38687">MPRSFLVKSKKAHTYHQHRFVEDDLPIFTWDPITSAFTAAGDRDKTPEDGKKQDLEWVVPKQEKDSFQPKEESVPVQYLSRMLPGPSAQDMSISGLQVKDCTNPTSMPTFYKTGFSWDAFQLPYSYRQMSSTMQSALLEHPVSLYGSHLLPSAEPPLDYSMRYSSDMETYHCVKCNKVFSTPHGLEVHVRRSHSGTRPFACEVCGKTFGHAVSLEQHTNIHSQERSFECKMCGKTFKRSSTLSTHLLIHSDTRPYPCQYCGKRFHQKSDMKKHTYIHTGEKPHKCQVCGKAFSQSSNLITHSRKHTGFKPFSCELCAKGFQRKVDLRRHRETQHSLK</sequence>
<proteinExistence type="evidence at transcript level"/>